<reference key="1">
    <citation type="journal article" date="2002" name="J. Bacteriol.">
        <title>Whole-genome comparison of Mycobacterium tuberculosis clinical and laboratory strains.</title>
        <authorList>
            <person name="Fleischmann R.D."/>
            <person name="Alland D."/>
            <person name="Eisen J.A."/>
            <person name="Carpenter L."/>
            <person name="White O."/>
            <person name="Peterson J.D."/>
            <person name="DeBoy R.T."/>
            <person name="Dodson R.J."/>
            <person name="Gwinn M.L."/>
            <person name="Haft D.H."/>
            <person name="Hickey E.K."/>
            <person name="Kolonay J.F."/>
            <person name="Nelson W.C."/>
            <person name="Umayam L.A."/>
            <person name="Ermolaeva M.D."/>
            <person name="Salzberg S.L."/>
            <person name="Delcher A."/>
            <person name="Utterback T.R."/>
            <person name="Weidman J.F."/>
            <person name="Khouri H.M."/>
            <person name="Gill J."/>
            <person name="Mikula A."/>
            <person name="Bishai W."/>
            <person name="Jacobs W.R. Jr."/>
            <person name="Venter J.C."/>
            <person name="Fraser C.M."/>
        </authorList>
    </citation>
    <scope>NUCLEOTIDE SEQUENCE [LARGE SCALE GENOMIC DNA]</scope>
    <source>
        <strain>CDC 1551 / Oshkosh</strain>
    </source>
</reference>
<protein>
    <recommendedName>
        <fullName>Electron transfer flavoprotein subunit beta</fullName>
        <shortName>Beta-ETF</shortName>
    </recommendedName>
    <alternativeName>
        <fullName>Electron transfer flavoprotein small subunit</fullName>
        <shortName>ETFSS</shortName>
    </alternativeName>
</protein>
<dbReference type="EMBL" id="AE000516">
    <property type="protein sequence ID" value="AAK47443.1"/>
    <property type="molecule type" value="Genomic_DNA"/>
</dbReference>
<dbReference type="PIR" id="H70858">
    <property type="entry name" value="H70858"/>
</dbReference>
<dbReference type="RefSeq" id="WP_003415921.1">
    <property type="nucleotide sequence ID" value="NZ_KK341227.1"/>
</dbReference>
<dbReference type="SMR" id="P9WNG6"/>
<dbReference type="KEGG" id="mtc:MT3113"/>
<dbReference type="PATRIC" id="fig|83331.31.peg.3355"/>
<dbReference type="HOGENOM" id="CLU_060196_2_0_11"/>
<dbReference type="Proteomes" id="UP000001020">
    <property type="component" value="Chromosome"/>
</dbReference>
<dbReference type="GO" id="GO:0005829">
    <property type="term" value="C:cytosol"/>
    <property type="evidence" value="ECO:0007669"/>
    <property type="project" value="TreeGrafter"/>
</dbReference>
<dbReference type="GO" id="GO:0009055">
    <property type="term" value="F:electron transfer activity"/>
    <property type="evidence" value="ECO:0007669"/>
    <property type="project" value="InterPro"/>
</dbReference>
<dbReference type="CDD" id="cd01714">
    <property type="entry name" value="ETF_beta"/>
    <property type="match status" value="1"/>
</dbReference>
<dbReference type="FunFam" id="3.40.50.620:FF:000086">
    <property type="entry name" value="Electron transfer flavoprotein subunit beta"/>
    <property type="match status" value="1"/>
</dbReference>
<dbReference type="Gene3D" id="3.40.50.620">
    <property type="entry name" value="HUPs"/>
    <property type="match status" value="1"/>
</dbReference>
<dbReference type="InterPro" id="IPR000049">
    <property type="entry name" value="ET-Flavoprotein_bsu_CS"/>
</dbReference>
<dbReference type="InterPro" id="IPR014730">
    <property type="entry name" value="ETF_a/b_N"/>
</dbReference>
<dbReference type="InterPro" id="IPR012255">
    <property type="entry name" value="ETF_b"/>
</dbReference>
<dbReference type="InterPro" id="IPR033948">
    <property type="entry name" value="ETF_beta_N"/>
</dbReference>
<dbReference type="InterPro" id="IPR014729">
    <property type="entry name" value="Rossmann-like_a/b/a_fold"/>
</dbReference>
<dbReference type="PANTHER" id="PTHR21294">
    <property type="entry name" value="ELECTRON TRANSFER FLAVOPROTEIN BETA-SUBUNIT"/>
    <property type="match status" value="1"/>
</dbReference>
<dbReference type="PANTHER" id="PTHR21294:SF8">
    <property type="entry name" value="ELECTRON TRANSFER FLAVOPROTEIN SUBUNIT BETA"/>
    <property type="match status" value="1"/>
</dbReference>
<dbReference type="Pfam" id="PF01012">
    <property type="entry name" value="ETF"/>
    <property type="match status" value="1"/>
</dbReference>
<dbReference type="PIRSF" id="PIRSF000090">
    <property type="entry name" value="Beta-ETF"/>
    <property type="match status" value="1"/>
</dbReference>
<dbReference type="SMART" id="SM00893">
    <property type="entry name" value="ETF"/>
    <property type="match status" value="1"/>
</dbReference>
<dbReference type="SUPFAM" id="SSF52402">
    <property type="entry name" value="Adenine nucleotide alpha hydrolases-like"/>
    <property type="match status" value="1"/>
</dbReference>
<dbReference type="PROSITE" id="PS01065">
    <property type="entry name" value="ETF_BETA"/>
    <property type="match status" value="1"/>
</dbReference>
<keyword id="KW-0249">Electron transport</keyword>
<keyword id="KW-0274">FAD</keyword>
<keyword id="KW-0285">Flavoprotein</keyword>
<keyword id="KW-1185">Reference proteome</keyword>
<keyword id="KW-0813">Transport</keyword>
<gene>
    <name type="primary">etfB</name>
    <name type="synonym">fixA</name>
    <name type="ordered locus">MT3113</name>
</gene>
<sequence length="266" mass="28081">MTNIVVLIKQVPDTWSERKLTDGDFTLDREAADAVLDEINERAVEEALQIREKEAADGIEGSVTVLTAGPERATEAIRKALSMGADKAVHLKDDGMHGSDVIQTGWALARALGTIEGTELVIAGNESTDGVGGAVPAIIAEYLGLPQLTHLRKVSIEGGKITGERETDEGVFTLEATLPAVISVNEKINEPRFPSFKGIMAAKKKEVTVLTLAEIGVESDEVGLANAGSTVLASTPKPAKTAGEKVTDEGEGGNQIVQYLVAQKII</sequence>
<organism>
    <name type="scientific">Mycobacterium tuberculosis (strain CDC 1551 / Oshkosh)</name>
    <dbReference type="NCBI Taxonomy" id="83331"/>
    <lineage>
        <taxon>Bacteria</taxon>
        <taxon>Bacillati</taxon>
        <taxon>Actinomycetota</taxon>
        <taxon>Actinomycetes</taxon>
        <taxon>Mycobacteriales</taxon>
        <taxon>Mycobacteriaceae</taxon>
        <taxon>Mycobacterium</taxon>
        <taxon>Mycobacterium tuberculosis complex</taxon>
    </lineage>
</organism>
<name>ETFB_MYCTO</name>
<accession>P9WNG6</accession>
<accession>L0TBK7</accession>
<accession>O53276</accession>
<accession>P64097</accession>
<proteinExistence type="inferred from homology"/>
<feature type="chain" id="PRO_0000427130" description="Electron transfer flavoprotein subunit beta">
    <location>
        <begin position="1"/>
        <end position="266"/>
    </location>
</feature>
<comment type="function">
    <text evidence="1">The electron transfer flavoprotein serves as a specific electron acceptor for other dehydrogenases. It transfers the electrons to the main respiratory chain via ETF-ubiquinone oxidoreductase (ETF dehydrogenase) (By similarity).</text>
</comment>
<comment type="cofactor">
    <cofactor evidence="1">
        <name>FAD</name>
        <dbReference type="ChEBI" id="CHEBI:57692"/>
    </cofactor>
    <text evidence="1">Binds 1 FAD per dimer.</text>
</comment>
<comment type="cofactor">
    <cofactor evidence="1">
        <name>AMP</name>
        <dbReference type="ChEBI" id="CHEBI:456215"/>
    </cofactor>
    <text evidence="1">Binds 1 AMP per subunit.</text>
</comment>
<comment type="subunit">
    <text evidence="1">Heterodimer of an alpha and a beta subunit.</text>
</comment>
<comment type="similarity">
    <text evidence="2">Belongs to the ETF beta-subunit/FixA family.</text>
</comment>
<evidence type="ECO:0000250" key="1"/>
<evidence type="ECO:0000305" key="2"/>